<gene>
    <name evidence="1" type="primary">fusA1</name>
    <name type="ordered locus">Reut_A3183</name>
</gene>
<proteinExistence type="inferred from homology"/>
<organism>
    <name type="scientific">Cupriavidus pinatubonensis (strain JMP 134 / LMG 1197)</name>
    <name type="common">Cupriavidus necator (strain JMP 134)</name>
    <dbReference type="NCBI Taxonomy" id="264198"/>
    <lineage>
        <taxon>Bacteria</taxon>
        <taxon>Pseudomonadati</taxon>
        <taxon>Pseudomonadota</taxon>
        <taxon>Betaproteobacteria</taxon>
        <taxon>Burkholderiales</taxon>
        <taxon>Burkholderiaceae</taxon>
        <taxon>Cupriavidus</taxon>
    </lineage>
</organism>
<dbReference type="EMBL" id="CP000090">
    <property type="protein sequence ID" value="AAZ62543.1"/>
    <property type="molecule type" value="Genomic_DNA"/>
</dbReference>
<dbReference type="SMR" id="Q46WE0"/>
<dbReference type="STRING" id="264198.Reut_A3183"/>
<dbReference type="KEGG" id="reu:Reut_A3183"/>
<dbReference type="eggNOG" id="COG0480">
    <property type="taxonomic scope" value="Bacteria"/>
</dbReference>
<dbReference type="HOGENOM" id="CLU_002794_4_1_4"/>
<dbReference type="OrthoDB" id="9804431at2"/>
<dbReference type="GO" id="GO:0005737">
    <property type="term" value="C:cytoplasm"/>
    <property type="evidence" value="ECO:0007669"/>
    <property type="project" value="UniProtKB-SubCell"/>
</dbReference>
<dbReference type="GO" id="GO:0005525">
    <property type="term" value="F:GTP binding"/>
    <property type="evidence" value="ECO:0007669"/>
    <property type="project" value="UniProtKB-UniRule"/>
</dbReference>
<dbReference type="GO" id="GO:0003924">
    <property type="term" value="F:GTPase activity"/>
    <property type="evidence" value="ECO:0007669"/>
    <property type="project" value="InterPro"/>
</dbReference>
<dbReference type="GO" id="GO:0097216">
    <property type="term" value="F:guanosine tetraphosphate binding"/>
    <property type="evidence" value="ECO:0007669"/>
    <property type="project" value="UniProtKB-ARBA"/>
</dbReference>
<dbReference type="GO" id="GO:0003746">
    <property type="term" value="F:translation elongation factor activity"/>
    <property type="evidence" value="ECO:0007669"/>
    <property type="project" value="UniProtKB-UniRule"/>
</dbReference>
<dbReference type="GO" id="GO:0032790">
    <property type="term" value="P:ribosome disassembly"/>
    <property type="evidence" value="ECO:0007669"/>
    <property type="project" value="TreeGrafter"/>
</dbReference>
<dbReference type="CDD" id="cd01886">
    <property type="entry name" value="EF-G"/>
    <property type="match status" value="1"/>
</dbReference>
<dbReference type="CDD" id="cd16262">
    <property type="entry name" value="EFG_III"/>
    <property type="match status" value="1"/>
</dbReference>
<dbReference type="CDD" id="cd01434">
    <property type="entry name" value="EFG_mtEFG1_IV"/>
    <property type="match status" value="1"/>
</dbReference>
<dbReference type="CDD" id="cd03713">
    <property type="entry name" value="EFG_mtEFG_C"/>
    <property type="match status" value="1"/>
</dbReference>
<dbReference type="CDD" id="cd04088">
    <property type="entry name" value="EFG_mtEFG_II"/>
    <property type="match status" value="1"/>
</dbReference>
<dbReference type="FunFam" id="2.40.30.10:FF:000006">
    <property type="entry name" value="Elongation factor G"/>
    <property type="match status" value="1"/>
</dbReference>
<dbReference type="FunFam" id="3.30.230.10:FF:000003">
    <property type="entry name" value="Elongation factor G"/>
    <property type="match status" value="1"/>
</dbReference>
<dbReference type="FunFam" id="3.30.70.240:FF:000001">
    <property type="entry name" value="Elongation factor G"/>
    <property type="match status" value="1"/>
</dbReference>
<dbReference type="FunFam" id="3.30.70.870:FF:000001">
    <property type="entry name" value="Elongation factor G"/>
    <property type="match status" value="1"/>
</dbReference>
<dbReference type="FunFam" id="3.40.50.300:FF:000029">
    <property type="entry name" value="Elongation factor G"/>
    <property type="match status" value="1"/>
</dbReference>
<dbReference type="Gene3D" id="3.30.230.10">
    <property type="match status" value="1"/>
</dbReference>
<dbReference type="Gene3D" id="3.30.70.240">
    <property type="match status" value="1"/>
</dbReference>
<dbReference type="Gene3D" id="3.30.70.870">
    <property type="entry name" value="Elongation Factor G (Translational Gtpase), domain 3"/>
    <property type="match status" value="1"/>
</dbReference>
<dbReference type="Gene3D" id="3.40.50.300">
    <property type="entry name" value="P-loop containing nucleotide triphosphate hydrolases"/>
    <property type="match status" value="1"/>
</dbReference>
<dbReference type="Gene3D" id="2.40.30.10">
    <property type="entry name" value="Translation factors"/>
    <property type="match status" value="1"/>
</dbReference>
<dbReference type="HAMAP" id="MF_00054_B">
    <property type="entry name" value="EF_G_EF_2_B"/>
    <property type="match status" value="1"/>
</dbReference>
<dbReference type="InterPro" id="IPR041095">
    <property type="entry name" value="EFG_II"/>
</dbReference>
<dbReference type="InterPro" id="IPR009022">
    <property type="entry name" value="EFG_III"/>
</dbReference>
<dbReference type="InterPro" id="IPR035647">
    <property type="entry name" value="EFG_III/V"/>
</dbReference>
<dbReference type="InterPro" id="IPR047872">
    <property type="entry name" value="EFG_IV"/>
</dbReference>
<dbReference type="InterPro" id="IPR035649">
    <property type="entry name" value="EFG_V"/>
</dbReference>
<dbReference type="InterPro" id="IPR000640">
    <property type="entry name" value="EFG_V-like"/>
</dbReference>
<dbReference type="InterPro" id="IPR004161">
    <property type="entry name" value="EFTu-like_2"/>
</dbReference>
<dbReference type="InterPro" id="IPR031157">
    <property type="entry name" value="G_TR_CS"/>
</dbReference>
<dbReference type="InterPro" id="IPR027417">
    <property type="entry name" value="P-loop_NTPase"/>
</dbReference>
<dbReference type="InterPro" id="IPR020568">
    <property type="entry name" value="Ribosomal_Su5_D2-typ_SF"/>
</dbReference>
<dbReference type="InterPro" id="IPR014721">
    <property type="entry name" value="Ribsml_uS5_D2-typ_fold_subgr"/>
</dbReference>
<dbReference type="InterPro" id="IPR005225">
    <property type="entry name" value="Small_GTP-bd"/>
</dbReference>
<dbReference type="InterPro" id="IPR000795">
    <property type="entry name" value="T_Tr_GTP-bd_dom"/>
</dbReference>
<dbReference type="InterPro" id="IPR009000">
    <property type="entry name" value="Transl_B-barrel_sf"/>
</dbReference>
<dbReference type="InterPro" id="IPR004540">
    <property type="entry name" value="Transl_elong_EFG/EF2"/>
</dbReference>
<dbReference type="InterPro" id="IPR005517">
    <property type="entry name" value="Transl_elong_EFG/EF2_IV"/>
</dbReference>
<dbReference type="NCBIfam" id="TIGR00484">
    <property type="entry name" value="EF-G"/>
    <property type="match status" value="1"/>
</dbReference>
<dbReference type="NCBIfam" id="NF009381">
    <property type="entry name" value="PRK12740.1-5"/>
    <property type="match status" value="1"/>
</dbReference>
<dbReference type="NCBIfam" id="TIGR00231">
    <property type="entry name" value="small_GTP"/>
    <property type="match status" value="1"/>
</dbReference>
<dbReference type="PANTHER" id="PTHR43261:SF1">
    <property type="entry name" value="RIBOSOME-RELEASING FACTOR 2, MITOCHONDRIAL"/>
    <property type="match status" value="1"/>
</dbReference>
<dbReference type="PANTHER" id="PTHR43261">
    <property type="entry name" value="TRANSLATION ELONGATION FACTOR G-RELATED"/>
    <property type="match status" value="1"/>
</dbReference>
<dbReference type="Pfam" id="PF00679">
    <property type="entry name" value="EFG_C"/>
    <property type="match status" value="1"/>
</dbReference>
<dbReference type="Pfam" id="PF14492">
    <property type="entry name" value="EFG_III"/>
    <property type="match status" value="1"/>
</dbReference>
<dbReference type="Pfam" id="PF03764">
    <property type="entry name" value="EFG_IV"/>
    <property type="match status" value="1"/>
</dbReference>
<dbReference type="Pfam" id="PF00009">
    <property type="entry name" value="GTP_EFTU"/>
    <property type="match status" value="1"/>
</dbReference>
<dbReference type="Pfam" id="PF03144">
    <property type="entry name" value="GTP_EFTU_D2"/>
    <property type="match status" value="1"/>
</dbReference>
<dbReference type="PRINTS" id="PR00315">
    <property type="entry name" value="ELONGATNFCT"/>
</dbReference>
<dbReference type="SMART" id="SM00838">
    <property type="entry name" value="EFG_C"/>
    <property type="match status" value="1"/>
</dbReference>
<dbReference type="SMART" id="SM00889">
    <property type="entry name" value="EFG_IV"/>
    <property type="match status" value="1"/>
</dbReference>
<dbReference type="SUPFAM" id="SSF54980">
    <property type="entry name" value="EF-G C-terminal domain-like"/>
    <property type="match status" value="2"/>
</dbReference>
<dbReference type="SUPFAM" id="SSF52540">
    <property type="entry name" value="P-loop containing nucleoside triphosphate hydrolases"/>
    <property type="match status" value="1"/>
</dbReference>
<dbReference type="SUPFAM" id="SSF54211">
    <property type="entry name" value="Ribosomal protein S5 domain 2-like"/>
    <property type="match status" value="1"/>
</dbReference>
<dbReference type="SUPFAM" id="SSF50447">
    <property type="entry name" value="Translation proteins"/>
    <property type="match status" value="1"/>
</dbReference>
<dbReference type="PROSITE" id="PS00301">
    <property type="entry name" value="G_TR_1"/>
    <property type="match status" value="1"/>
</dbReference>
<dbReference type="PROSITE" id="PS51722">
    <property type="entry name" value="G_TR_2"/>
    <property type="match status" value="1"/>
</dbReference>
<reference key="1">
    <citation type="journal article" date="2010" name="PLoS ONE">
        <title>The complete multipartite genome sequence of Cupriavidus necator JMP134, a versatile pollutant degrader.</title>
        <authorList>
            <person name="Lykidis A."/>
            <person name="Perez-Pantoja D."/>
            <person name="Ledger T."/>
            <person name="Mavromatis K."/>
            <person name="Anderson I.J."/>
            <person name="Ivanova N.N."/>
            <person name="Hooper S.D."/>
            <person name="Lapidus A."/>
            <person name="Lucas S."/>
            <person name="Gonzalez B."/>
            <person name="Kyrpides N.C."/>
        </authorList>
    </citation>
    <scope>NUCLEOTIDE SEQUENCE [LARGE SCALE GENOMIC DNA]</scope>
    <source>
        <strain>JMP134 / LMG 1197</strain>
    </source>
</reference>
<comment type="function">
    <text evidence="1">Catalyzes the GTP-dependent ribosomal translocation step during translation elongation. During this step, the ribosome changes from the pre-translocational (PRE) to the post-translocational (POST) state as the newly formed A-site-bound peptidyl-tRNA and P-site-bound deacylated tRNA move to the P and E sites, respectively. Catalyzes the coordinated movement of the two tRNA molecules, the mRNA and conformational changes in the ribosome.</text>
</comment>
<comment type="subcellular location">
    <subcellularLocation>
        <location evidence="1">Cytoplasm</location>
    </subcellularLocation>
</comment>
<comment type="similarity">
    <text evidence="1">Belongs to the TRAFAC class translation factor GTPase superfamily. Classic translation factor GTPase family. EF-G/EF-2 subfamily.</text>
</comment>
<accession>Q46WE0</accession>
<feature type="chain" id="PRO_0000225234" description="Elongation factor G 1">
    <location>
        <begin position="1"/>
        <end position="702"/>
    </location>
</feature>
<feature type="domain" description="tr-type G">
    <location>
        <begin position="8"/>
        <end position="290"/>
    </location>
</feature>
<feature type="binding site" evidence="1">
    <location>
        <begin position="17"/>
        <end position="24"/>
    </location>
    <ligand>
        <name>GTP</name>
        <dbReference type="ChEBI" id="CHEBI:37565"/>
    </ligand>
</feature>
<feature type="binding site" evidence="1">
    <location>
        <begin position="88"/>
        <end position="92"/>
    </location>
    <ligand>
        <name>GTP</name>
        <dbReference type="ChEBI" id="CHEBI:37565"/>
    </ligand>
</feature>
<feature type="binding site" evidence="1">
    <location>
        <begin position="142"/>
        <end position="145"/>
    </location>
    <ligand>
        <name>GTP</name>
        <dbReference type="ChEBI" id="CHEBI:37565"/>
    </ligand>
</feature>
<keyword id="KW-0963">Cytoplasm</keyword>
<keyword id="KW-0251">Elongation factor</keyword>
<keyword id="KW-0342">GTP-binding</keyword>
<keyword id="KW-0547">Nucleotide-binding</keyword>
<keyword id="KW-0648">Protein biosynthesis</keyword>
<name>EFG1_CUPPJ</name>
<protein>
    <recommendedName>
        <fullName evidence="1">Elongation factor G 1</fullName>
        <shortName evidence="1">EF-G 1</shortName>
    </recommendedName>
</protein>
<evidence type="ECO:0000255" key="1">
    <source>
        <dbReference type="HAMAP-Rule" id="MF_00054"/>
    </source>
</evidence>
<sequence>MARKTPIERYRNIGISAHIDAGKTTTTERILFYTGVNHKIGEVHDGAATMDWMEQEQERGITITSAATTAFWKGMGGNYPEHRFNIIDTPGHVDFTIEVERSMRVLDGACMVYCAVGGVQPQSETVWRQANKYKVPRLAFVNKMDRTGANFFKVYDQLKTRLKANPVPVVVPIGAEDGFQGVVDLLEMKAIIWDEASQGVKFEYQDIPAELQATADEWREKMVESAAEASEELMEKYLGGEELTRAEIVKALRDRTIACEIQPMLCGTAFKNKGVQRMLDAVIDFLPSPVDIPPVTGTDEDDSEKKLERKADDTEKFSALAFKIMTDPFVGQLIFFRVYSGKINSGDTVYNPVKQKKERLGRILQMHANQREEIKEVLAGDIAAAVGLKDATTGDTLCDPAAPIVLERMIFPEPVISQAVEPKTKADQEKMGIALNRLAAEDPSFRVRTDEESGQTIISGMGELHLEILVDRMKREFGVEANIGAPQVAYRETIRKTAEGVEGKFVKQSGGRGQYGHAVITLEPQEPGKGFEFIDAIKGGVIPREYIPAVEKGIVDTLPSGILAGFPVVDVKVTLTFGSYHDVDSNENAFRMAGSMAFKEAMRKASPVLLEPMMAVEVETPEDYTGTVMGDLSSRRGIVQGMDDMVGGGKIIKAEVPLSEMFGYSTSLRSATQGRATYTMEFKHYAEAPKNIAEAVMAAKGK</sequence>